<sequence length="223" mass="24399">MNVKIKKLHNWDMTPTEAILLQRELAQKVSACGTLSSISLVAGADVWHSRTSGMGRAAVVVLSYPDMNLVEVSRSEGDCHIPYIPGLLSFREMPLLLSAFEGLESMPDFILMDGQGLAHPRRLGIASHLGLFLNKPVIGCAKSRLVGEYAPLADEAGSYSDLYHNSQLVGRVLRTRRGVNPLFISVGHKICLEEACSRVADCCRGYRLPEPLRHAHLAAAQLI</sequence>
<comment type="function">
    <text evidence="1">DNA repair enzyme involved in the repair of deaminated bases. Selectively cleaves double-stranded DNA at the second phosphodiester bond 3' to a deoxyinosine leaving behind the intact lesion on the nicked DNA.</text>
</comment>
<comment type="catalytic activity">
    <reaction evidence="1">
        <text>Endonucleolytic cleavage at apurinic or apyrimidinic sites to products with a 5'-phosphate.</text>
        <dbReference type="EC" id="3.1.21.7"/>
    </reaction>
</comment>
<comment type="cofactor">
    <cofactor evidence="1">
        <name>Mg(2+)</name>
        <dbReference type="ChEBI" id="CHEBI:18420"/>
    </cofactor>
</comment>
<comment type="subcellular location">
    <subcellularLocation>
        <location evidence="1">Cytoplasm</location>
    </subcellularLocation>
</comment>
<comment type="similarity">
    <text evidence="1">Belongs to the endonuclease V family.</text>
</comment>
<gene>
    <name evidence="1" type="primary">nfi</name>
    <name type="ordered locus">cbdbA542</name>
</gene>
<name>NFI_DEHMC</name>
<protein>
    <recommendedName>
        <fullName evidence="1">Endonuclease V</fullName>
        <ecNumber evidence="1">3.1.21.7</ecNumber>
    </recommendedName>
    <alternativeName>
        <fullName evidence="1">Deoxyinosine 3'endonuclease</fullName>
    </alternativeName>
    <alternativeName>
        <fullName evidence="1">Deoxyribonuclease V</fullName>
        <shortName evidence="1">DNase V</shortName>
    </alternativeName>
</protein>
<feature type="chain" id="PRO_1000212972" description="Endonuclease V">
    <location>
        <begin position="1"/>
        <end position="223"/>
    </location>
</feature>
<feature type="binding site" evidence="1">
    <location>
        <position position="45"/>
    </location>
    <ligand>
        <name>Mg(2+)</name>
        <dbReference type="ChEBI" id="CHEBI:18420"/>
    </ligand>
</feature>
<feature type="binding site" evidence="1">
    <location>
        <position position="113"/>
    </location>
    <ligand>
        <name>Mg(2+)</name>
        <dbReference type="ChEBI" id="CHEBI:18420"/>
    </ligand>
</feature>
<feature type="site" description="Interaction with target DNA" evidence="1">
    <location>
        <position position="83"/>
    </location>
</feature>
<accession>Q3ZWY7</accession>
<evidence type="ECO:0000255" key="1">
    <source>
        <dbReference type="HAMAP-Rule" id="MF_00801"/>
    </source>
</evidence>
<reference key="1">
    <citation type="journal article" date="2005" name="Nat. Biotechnol.">
        <title>Genome sequence of the chlorinated compound-respiring bacterium Dehalococcoides species strain CBDB1.</title>
        <authorList>
            <person name="Kube M."/>
            <person name="Beck A."/>
            <person name="Zinder S.H."/>
            <person name="Kuhl H."/>
            <person name="Reinhardt R."/>
            <person name="Adrian L."/>
        </authorList>
    </citation>
    <scope>NUCLEOTIDE SEQUENCE [LARGE SCALE GENOMIC DNA]</scope>
    <source>
        <strain>CBDB1</strain>
    </source>
</reference>
<organism>
    <name type="scientific">Dehalococcoides mccartyi (strain CBDB1)</name>
    <dbReference type="NCBI Taxonomy" id="255470"/>
    <lineage>
        <taxon>Bacteria</taxon>
        <taxon>Bacillati</taxon>
        <taxon>Chloroflexota</taxon>
        <taxon>Dehalococcoidia</taxon>
        <taxon>Dehalococcoidales</taxon>
        <taxon>Dehalococcoidaceae</taxon>
        <taxon>Dehalococcoides</taxon>
    </lineage>
</organism>
<keyword id="KW-0963">Cytoplasm</keyword>
<keyword id="KW-0227">DNA damage</keyword>
<keyword id="KW-0234">DNA repair</keyword>
<keyword id="KW-0255">Endonuclease</keyword>
<keyword id="KW-0378">Hydrolase</keyword>
<keyword id="KW-0460">Magnesium</keyword>
<keyword id="KW-0479">Metal-binding</keyword>
<keyword id="KW-0540">Nuclease</keyword>
<proteinExistence type="inferred from homology"/>
<dbReference type="EC" id="3.1.21.7" evidence="1"/>
<dbReference type="EMBL" id="AJ965256">
    <property type="protein sequence ID" value="CAI82731.1"/>
    <property type="molecule type" value="Genomic_DNA"/>
</dbReference>
<dbReference type="RefSeq" id="WP_011309082.1">
    <property type="nucleotide sequence ID" value="NC_007356.1"/>
</dbReference>
<dbReference type="SMR" id="Q3ZWY7"/>
<dbReference type="KEGG" id="deh:cbdbA542"/>
<dbReference type="HOGENOM" id="CLU_047631_1_1_0"/>
<dbReference type="Proteomes" id="UP000000433">
    <property type="component" value="Chromosome"/>
</dbReference>
<dbReference type="GO" id="GO:0005737">
    <property type="term" value="C:cytoplasm"/>
    <property type="evidence" value="ECO:0007669"/>
    <property type="project" value="UniProtKB-SubCell"/>
</dbReference>
<dbReference type="GO" id="GO:0043737">
    <property type="term" value="F:deoxyribonuclease V activity"/>
    <property type="evidence" value="ECO:0007669"/>
    <property type="project" value="UniProtKB-UniRule"/>
</dbReference>
<dbReference type="GO" id="GO:0000287">
    <property type="term" value="F:magnesium ion binding"/>
    <property type="evidence" value="ECO:0007669"/>
    <property type="project" value="UniProtKB-UniRule"/>
</dbReference>
<dbReference type="GO" id="GO:0016891">
    <property type="term" value="F:RNA endonuclease activity, producing 5'-phosphomonoesters"/>
    <property type="evidence" value="ECO:0007669"/>
    <property type="project" value="TreeGrafter"/>
</dbReference>
<dbReference type="GO" id="GO:0003727">
    <property type="term" value="F:single-stranded RNA binding"/>
    <property type="evidence" value="ECO:0007669"/>
    <property type="project" value="TreeGrafter"/>
</dbReference>
<dbReference type="GO" id="GO:0006281">
    <property type="term" value="P:DNA repair"/>
    <property type="evidence" value="ECO:0007669"/>
    <property type="project" value="UniProtKB-UniRule"/>
</dbReference>
<dbReference type="CDD" id="cd06559">
    <property type="entry name" value="Endonuclease_V"/>
    <property type="match status" value="1"/>
</dbReference>
<dbReference type="Gene3D" id="3.30.2170.10">
    <property type="entry name" value="archaeoglobus fulgidus dsm 4304 superfamily"/>
    <property type="match status" value="1"/>
</dbReference>
<dbReference type="HAMAP" id="MF_00801">
    <property type="entry name" value="Endonuclease_5"/>
    <property type="match status" value="1"/>
</dbReference>
<dbReference type="InterPro" id="IPR007581">
    <property type="entry name" value="Endonuclease-V"/>
</dbReference>
<dbReference type="NCBIfam" id="NF008629">
    <property type="entry name" value="PRK11617.1"/>
    <property type="match status" value="1"/>
</dbReference>
<dbReference type="PANTHER" id="PTHR28511">
    <property type="entry name" value="ENDONUCLEASE V"/>
    <property type="match status" value="1"/>
</dbReference>
<dbReference type="PANTHER" id="PTHR28511:SF1">
    <property type="entry name" value="ENDONUCLEASE V"/>
    <property type="match status" value="1"/>
</dbReference>
<dbReference type="Pfam" id="PF04493">
    <property type="entry name" value="Endonuclease_5"/>
    <property type="match status" value="1"/>
</dbReference>